<gene>
    <name evidence="1" type="primary">FEN1</name>
    <name type="ORF">CMU_034180</name>
</gene>
<comment type="function">
    <text evidence="1">Structure-specific nuclease with 5'-flap endonuclease and 5'-3' exonuclease activities involved in DNA replication and repair. During DNA replication, cleaves the 5'-overhanging flap structure that is generated by displacement synthesis when DNA polymerase encounters the 5'-end of a downstream Okazaki fragment. It enters the flap from the 5'-end and then tracks to cleave the flap base, leaving a nick for ligation. Also involved in the long patch base excision repair (LP-BER) pathway, by cleaving within the apurinic/apyrimidinic (AP) site-terminated flap. Acts as a genome stabilization factor that prevents flaps from equilibrating into structures that lead to duplications and deletions. Also possesses 5'-3' exonuclease activity on nicked or gapped double-stranded DNA, and exhibits RNase H activity. Also involved in replication and repair of rDNA and in repairing mitochondrial DNA.</text>
</comment>
<comment type="cofactor">
    <cofactor evidence="1">
        <name>Mg(2+)</name>
        <dbReference type="ChEBI" id="CHEBI:18420"/>
    </cofactor>
    <text evidence="1">Binds 2 magnesium ions per subunit. They probably participate in the reaction catalyzed by the enzyme. May bind an additional third magnesium ion after substrate binding.</text>
</comment>
<comment type="subunit">
    <text evidence="1">Interacts with PCNA. Three molecules of FEN1 bind to one PCNA trimer with each molecule binding to one PCNA monomer. PCNA stimulates the nuclease activity without altering cleavage specificity.</text>
</comment>
<comment type="subcellular location">
    <subcellularLocation>
        <location evidence="1">Nucleus</location>
        <location evidence="1">Nucleolus</location>
    </subcellularLocation>
    <subcellularLocation>
        <location evidence="1">Nucleus</location>
        <location evidence="1">Nucleoplasm</location>
    </subcellularLocation>
    <subcellularLocation>
        <location evidence="1">Mitochondrion</location>
    </subcellularLocation>
    <text evidence="1">Resides mostly in the nucleoli and relocalizes to the nucleoplasm upon DNA damage.</text>
</comment>
<comment type="PTM">
    <text evidence="1">Phosphorylated. Phosphorylation upon DNA damage induces relocalization to the nuclear plasma.</text>
</comment>
<comment type="similarity">
    <text evidence="1">Belongs to the XPG/RAD2 endonuclease family. FEN1 subfamily.</text>
</comment>
<evidence type="ECO:0000255" key="1">
    <source>
        <dbReference type="HAMAP-Rule" id="MF_03140"/>
    </source>
</evidence>
<accession>B6AFP1</accession>
<keyword id="KW-0227">DNA damage</keyword>
<keyword id="KW-0234">DNA repair</keyword>
<keyword id="KW-0235">DNA replication</keyword>
<keyword id="KW-0255">Endonuclease</keyword>
<keyword id="KW-0269">Exonuclease</keyword>
<keyword id="KW-0378">Hydrolase</keyword>
<keyword id="KW-0460">Magnesium</keyword>
<keyword id="KW-0479">Metal-binding</keyword>
<keyword id="KW-0496">Mitochondrion</keyword>
<keyword id="KW-0540">Nuclease</keyword>
<keyword id="KW-0539">Nucleus</keyword>
<keyword id="KW-0597">Phosphoprotein</keyword>
<keyword id="KW-1185">Reference proteome</keyword>
<proteinExistence type="inferred from homology"/>
<protein>
    <recommendedName>
        <fullName evidence="1">Flap endonuclease 1</fullName>
        <shortName evidence="1">FEN-1</shortName>
        <ecNumber evidence="1">3.1.-.-</ecNumber>
    </recommendedName>
    <alternativeName>
        <fullName evidence="1">Flap structure-specific endonuclease 1</fullName>
    </alternativeName>
</protein>
<name>FEN1_CRYMR</name>
<feature type="chain" id="PRO_0000403532" description="Flap endonuclease 1">
    <location>
        <begin position="1"/>
        <end position="472"/>
    </location>
</feature>
<feature type="region of interest" description="N-domain">
    <location>
        <begin position="1"/>
        <end position="106"/>
    </location>
</feature>
<feature type="region of interest" description="I-domain">
    <location>
        <begin position="124"/>
        <end position="263"/>
    </location>
</feature>
<feature type="region of interest" description="Interaction with PCNA" evidence="1">
    <location>
        <begin position="348"/>
        <end position="356"/>
    </location>
</feature>
<feature type="binding site" evidence="1">
    <location>
        <position position="34"/>
    </location>
    <ligand>
        <name>Mg(2+)</name>
        <dbReference type="ChEBI" id="CHEBI:18420"/>
        <label>1</label>
    </ligand>
</feature>
<feature type="binding site" evidence="1">
    <location>
        <position position="47"/>
    </location>
    <ligand>
        <name>DNA</name>
        <dbReference type="ChEBI" id="CHEBI:16991"/>
    </ligand>
</feature>
<feature type="binding site" evidence="1">
    <location>
        <position position="72"/>
    </location>
    <ligand>
        <name>DNA</name>
        <dbReference type="ChEBI" id="CHEBI:16991"/>
    </ligand>
</feature>
<feature type="binding site" evidence="1">
    <location>
        <position position="88"/>
    </location>
    <ligand>
        <name>Mg(2+)</name>
        <dbReference type="ChEBI" id="CHEBI:18420"/>
        <label>1</label>
    </ligand>
</feature>
<feature type="binding site" evidence="1">
    <location>
        <position position="160"/>
    </location>
    <ligand>
        <name>DNA</name>
        <dbReference type="ChEBI" id="CHEBI:16991"/>
    </ligand>
</feature>
<feature type="binding site" evidence="1">
    <location>
        <position position="160"/>
    </location>
    <ligand>
        <name>Mg(2+)</name>
        <dbReference type="ChEBI" id="CHEBI:18420"/>
        <label>1</label>
    </ligand>
</feature>
<feature type="binding site" evidence="1">
    <location>
        <position position="162"/>
    </location>
    <ligand>
        <name>Mg(2+)</name>
        <dbReference type="ChEBI" id="CHEBI:18420"/>
        <label>1</label>
    </ligand>
</feature>
<feature type="binding site" evidence="1">
    <location>
        <position position="181"/>
    </location>
    <ligand>
        <name>Mg(2+)</name>
        <dbReference type="ChEBI" id="CHEBI:18420"/>
        <label>2</label>
    </ligand>
</feature>
<feature type="binding site" evidence="1">
    <location>
        <position position="183"/>
    </location>
    <ligand>
        <name>Mg(2+)</name>
        <dbReference type="ChEBI" id="CHEBI:18420"/>
        <label>2</label>
    </ligand>
</feature>
<feature type="binding site" evidence="1">
    <location>
        <position position="241"/>
    </location>
    <ligand>
        <name>DNA</name>
        <dbReference type="ChEBI" id="CHEBI:16991"/>
    </ligand>
</feature>
<feature type="binding site" evidence="1">
    <location>
        <position position="243"/>
    </location>
    <ligand>
        <name>DNA</name>
        <dbReference type="ChEBI" id="CHEBI:16991"/>
    </ligand>
</feature>
<feature type="binding site" evidence="1">
    <location>
        <position position="243"/>
    </location>
    <ligand>
        <name>Mg(2+)</name>
        <dbReference type="ChEBI" id="CHEBI:18420"/>
        <label>2</label>
    </ligand>
</feature>
<sequence>MGIKGLARFLVDNAPKSIQQQSIDSLIGRIIAIDASMWMYQFLAAIREGSQWGNLTNEAGESTSHISGMLSRTIRLLEAGIKPVFVFDGEPPELKMEELMKRKERREKAQQELEKAQEEGDTETIRKQLIRTIKITKEQSDDVKYMLKLLGIPVIEATSEAEAQCAELCKEGLVYGVATEDADSLTFGTPLVIRHLNFSDGKFSDSKGNSKNSLQVIKLSTVLSDLGLSMQQFVDLCILCGCDYCGTIRGIGALTAYKLLKKHKDIETIINELDKNKHPLPMSFDYIKVRELFTNPNVIKAKEFRDKLKWTNPNLEGLSEWLIKQQNFSEVRVANYCTRIKKSKGKTAQTSLDSFFTLTPKKTSENKNKEKEITKVQEVKETISNINKDTRKDSVSEWGEIKTKIIETKEDKLDFERRNKIIQEDKLNSKKEFDYNEKLQCNSTAENTPIIDNKAKVLSIKKRRINRVNYDE</sequence>
<organism>
    <name type="scientific">Cryptosporidium muris (strain RN66)</name>
    <dbReference type="NCBI Taxonomy" id="441375"/>
    <lineage>
        <taxon>Eukaryota</taxon>
        <taxon>Sar</taxon>
        <taxon>Alveolata</taxon>
        <taxon>Apicomplexa</taxon>
        <taxon>Conoidasida</taxon>
        <taxon>Coccidia</taxon>
        <taxon>Eucoccidiorida</taxon>
        <taxon>Eimeriorina</taxon>
        <taxon>Cryptosporidiidae</taxon>
        <taxon>Cryptosporidium</taxon>
    </lineage>
</organism>
<reference key="1">
    <citation type="submission" date="2008-06" db="EMBL/GenBank/DDBJ databases">
        <authorList>
            <person name="Lorenzi H."/>
            <person name="Inman J."/>
            <person name="Miller J."/>
            <person name="Schobel S."/>
            <person name="Amedeo P."/>
            <person name="Caler E.V."/>
            <person name="da Silva J."/>
        </authorList>
    </citation>
    <scope>NUCLEOTIDE SEQUENCE [LARGE SCALE GENOMIC DNA]</scope>
    <source>
        <strain>RN66</strain>
    </source>
</reference>
<dbReference type="EC" id="3.1.-.-" evidence="1"/>
<dbReference type="EMBL" id="DS989731">
    <property type="protein sequence ID" value="EEA07032.1"/>
    <property type="molecule type" value="Genomic_DNA"/>
</dbReference>
<dbReference type="RefSeq" id="XP_002141381.1">
    <property type="nucleotide sequence ID" value="XM_002141345.1"/>
</dbReference>
<dbReference type="SMR" id="B6AFP1"/>
<dbReference type="STRING" id="441375.B6AFP1"/>
<dbReference type="EnsemblProtists" id="EEA07032">
    <property type="protein sequence ID" value="EEA07032"/>
    <property type="gene ID" value="CMU_034180"/>
</dbReference>
<dbReference type="GeneID" id="6996530"/>
<dbReference type="VEuPathDB" id="CryptoDB:CMU_034180"/>
<dbReference type="eggNOG" id="KOG2519">
    <property type="taxonomic scope" value="Eukaryota"/>
</dbReference>
<dbReference type="OMA" id="MGIPWVQ"/>
<dbReference type="OrthoDB" id="1937206at2759"/>
<dbReference type="Proteomes" id="UP000001460">
    <property type="component" value="Unassembled WGS sequence"/>
</dbReference>
<dbReference type="GO" id="GO:0005739">
    <property type="term" value="C:mitochondrion"/>
    <property type="evidence" value="ECO:0007669"/>
    <property type="project" value="UniProtKB-SubCell"/>
</dbReference>
<dbReference type="GO" id="GO:0005730">
    <property type="term" value="C:nucleolus"/>
    <property type="evidence" value="ECO:0007669"/>
    <property type="project" value="UniProtKB-SubCell"/>
</dbReference>
<dbReference type="GO" id="GO:0005654">
    <property type="term" value="C:nucleoplasm"/>
    <property type="evidence" value="ECO:0007669"/>
    <property type="project" value="UniProtKB-SubCell"/>
</dbReference>
<dbReference type="GO" id="GO:0008409">
    <property type="term" value="F:5'-3' exonuclease activity"/>
    <property type="evidence" value="ECO:0007669"/>
    <property type="project" value="UniProtKB-UniRule"/>
</dbReference>
<dbReference type="GO" id="GO:0017108">
    <property type="term" value="F:5'-flap endonuclease activity"/>
    <property type="evidence" value="ECO:0007669"/>
    <property type="project" value="UniProtKB-UniRule"/>
</dbReference>
<dbReference type="GO" id="GO:0003677">
    <property type="term" value="F:DNA binding"/>
    <property type="evidence" value="ECO:0007669"/>
    <property type="project" value="UniProtKB-UniRule"/>
</dbReference>
<dbReference type="GO" id="GO:0000287">
    <property type="term" value="F:magnesium ion binding"/>
    <property type="evidence" value="ECO:0007669"/>
    <property type="project" value="UniProtKB-UniRule"/>
</dbReference>
<dbReference type="GO" id="GO:0006284">
    <property type="term" value="P:base-excision repair"/>
    <property type="evidence" value="ECO:0007669"/>
    <property type="project" value="UniProtKB-UniRule"/>
</dbReference>
<dbReference type="GO" id="GO:0043137">
    <property type="term" value="P:DNA replication, removal of RNA primer"/>
    <property type="evidence" value="ECO:0007669"/>
    <property type="project" value="UniProtKB-UniRule"/>
</dbReference>
<dbReference type="CDD" id="cd09907">
    <property type="entry name" value="H3TH_FEN1-Euk"/>
    <property type="match status" value="1"/>
</dbReference>
<dbReference type="CDD" id="cd09867">
    <property type="entry name" value="PIN_FEN1"/>
    <property type="match status" value="1"/>
</dbReference>
<dbReference type="FunFam" id="1.10.150.20:FF:000009">
    <property type="entry name" value="Flap endonuclease 1"/>
    <property type="match status" value="1"/>
</dbReference>
<dbReference type="FunFam" id="3.40.50.1010:FF:000016">
    <property type="entry name" value="Flap endonuclease 1"/>
    <property type="match status" value="1"/>
</dbReference>
<dbReference type="Gene3D" id="1.10.150.20">
    <property type="entry name" value="5' to 3' exonuclease, C-terminal subdomain"/>
    <property type="match status" value="1"/>
</dbReference>
<dbReference type="Gene3D" id="3.40.50.1010">
    <property type="entry name" value="5'-nuclease"/>
    <property type="match status" value="1"/>
</dbReference>
<dbReference type="HAMAP" id="MF_00614">
    <property type="entry name" value="Fen"/>
    <property type="match status" value="1"/>
</dbReference>
<dbReference type="InterPro" id="IPR002421">
    <property type="entry name" value="5-3_exonuclease"/>
</dbReference>
<dbReference type="InterPro" id="IPR036279">
    <property type="entry name" value="5-3_exonuclease_C_sf"/>
</dbReference>
<dbReference type="InterPro" id="IPR023426">
    <property type="entry name" value="Flap_endonuc"/>
</dbReference>
<dbReference type="InterPro" id="IPR008918">
    <property type="entry name" value="HhH2"/>
</dbReference>
<dbReference type="InterPro" id="IPR029060">
    <property type="entry name" value="PIN-like_dom_sf"/>
</dbReference>
<dbReference type="InterPro" id="IPR006086">
    <property type="entry name" value="XPG-I_dom"/>
</dbReference>
<dbReference type="InterPro" id="IPR006084">
    <property type="entry name" value="XPG/Rad2"/>
</dbReference>
<dbReference type="InterPro" id="IPR019974">
    <property type="entry name" value="XPG_CS"/>
</dbReference>
<dbReference type="InterPro" id="IPR006085">
    <property type="entry name" value="XPG_DNA_repair_N"/>
</dbReference>
<dbReference type="PANTHER" id="PTHR11081:SF9">
    <property type="entry name" value="FLAP ENDONUCLEASE 1"/>
    <property type="match status" value="1"/>
</dbReference>
<dbReference type="PANTHER" id="PTHR11081">
    <property type="entry name" value="FLAP ENDONUCLEASE FAMILY MEMBER"/>
    <property type="match status" value="1"/>
</dbReference>
<dbReference type="Pfam" id="PF00867">
    <property type="entry name" value="XPG_I"/>
    <property type="match status" value="1"/>
</dbReference>
<dbReference type="Pfam" id="PF00752">
    <property type="entry name" value="XPG_N"/>
    <property type="match status" value="1"/>
</dbReference>
<dbReference type="PRINTS" id="PR00853">
    <property type="entry name" value="XPGRADSUPER"/>
</dbReference>
<dbReference type="SMART" id="SM00475">
    <property type="entry name" value="53EXOc"/>
    <property type="match status" value="1"/>
</dbReference>
<dbReference type="SMART" id="SM00279">
    <property type="entry name" value="HhH2"/>
    <property type="match status" value="1"/>
</dbReference>
<dbReference type="SMART" id="SM00484">
    <property type="entry name" value="XPGI"/>
    <property type="match status" value="1"/>
</dbReference>
<dbReference type="SMART" id="SM00485">
    <property type="entry name" value="XPGN"/>
    <property type="match status" value="1"/>
</dbReference>
<dbReference type="SUPFAM" id="SSF47807">
    <property type="entry name" value="5' to 3' exonuclease, C-terminal subdomain"/>
    <property type="match status" value="1"/>
</dbReference>
<dbReference type="SUPFAM" id="SSF88723">
    <property type="entry name" value="PIN domain-like"/>
    <property type="match status" value="1"/>
</dbReference>
<dbReference type="PROSITE" id="PS00841">
    <property type="entry name" value="XPG_1"/>
    <property type="match status" value="1"/>
</dbReference>